<reference key="1">
    <citation type="journal article" date="2008" name="J. Bacteriol.">
        <title>Comparative genome sequence analysis of multidrug-resistant Acinetobacter baumannii.</title>
        <authorList>
            <person name="Adams M.D."/>
            <person name="Goglin K."/>
            <person name="Molyneaux N."/>
            <person name="Hujer K.M."/>
            <person name="Lavender H."/>
            <person name="Jamison J.J."/>
            <person name="MacDonald I.J."/>
            <person name="Martin K.M."/>
            <person name="Russo T."/>
            <person name="Campagnari A.A."/>
            <person name="Hujer A.M."/>
            <person name="Bonomo R.A."/>
            <person name="Gill S.R."/>
        </authorList>
    </citation>
    <scope>NUCLEOTIDE SEQUENCE [LARGE SCALE GENOMIC DNA]</scope>
    <source>
        <strain>AB0057</strain>
    </source>
</reference>
<keyword id="KW-0002">3D-structure</keyword>
<keyword id="KW-0687">Ribonucleoprotein</keyword>
<keyword id="KW-0689">Ribosomal protein</keyword>
<keyword id="KW-0694">RNA-binding</keyword>
<keyword id="KW-0699">rRNA-binding</keyword>
<comment type="function">
    <text evidence="1">Binds the lower part of the 30S subunit head. Binds mRNA in the 70S ribosome, positioning it for translation.</text>
</comment>
<comment type="subunit">
    <text evidence="1">Part of the 30S ribosomal subunit. Forms a tight complex with proteins S10 and S14.</text>
</comment>
<comment type="similarity">
    <text evidence="1">Belongs to the universal ribosomal protein uS3 family.</text>
</comment>
<proteinExistence type="evidence at protein level"/>
<protein>
    <recommendedName>
        <fullName evidence="1">Small ribosomal subunit protein uS3</fullName>
    </recommendedName>
    <alternativeName>
        <fullName evidence="3">30S ribosomal protein S3</fullName>
    </alternativeName>
</protein>
<accession>B7IA33</accession>
<evidence type="ECO:0000255" key="1">
    <source>
        <dbReference type="HAMAP-Rule" id="MF_01309"/>
    </source>
</evidence>
<evidence type="ECO:0000256" key="2">
    <source>
        <dbReference type="SAM" id="MobiDB-lite"/>
    </source>
</evidence>
<evidence type="ECO:0000305" key="3"/>
<evidence type="ECO:0007829" key="4">
    <source>
        <dbReference type="PDB" id="7M4U"/>
    </source>
</evidence>
<gene>
    <name evidence="1" type="primary">rpsC</name>
    <name type="ordered locus">AB57_3524</name>
</gene>
<feature type="chain" id="PRO_1000140913" description="Small ribosomal subunit protein uS3">
    <location>
        <begin position="1"/>
        <end position="250"/>
    </location>
</feature>
<feature type="domain" description="KH type-2" evidence="1">
    <location>
        <begin position="39"/>
        <end position="107"/>
    </location>
</feature>
<feature type="region of interest" description="Disordered" evidence="2">
    <location>
        <begin position="215"/>
        <end position="250"/>
    </location>
</feature>
<feature type="compositionally biased region" description="Basic and acidic residues" evidence="2">
    <location>
        <begin position="220"/>
        <end position="250"/>
    </location>
</feature>
<feature type="helix" evidence="4">
    <location>
        <begin position="9"/>
        <end position="11"/>
    </location>
</feature>
<feature type="turn" evidence="4">
    <location>
        <begin position="12"/>
        <end position="15"/>
    </location>
</feature>
<feature type="strand" evidence="4">
    <location>
        <begin position="19"/>
        <end position="21"/>
    </location>
</feature>
<feature type="turn" evidence="4">
    <location>
        <begin position="26"/>
        <end position="28"/>
    </location>
</feature>
<feature type="helix" evidence="4">
    <location>
        <begin position="29"/>
        <end position="46"/>
    </location>
</feature>
<feature type="turn" evidence="4">
    <location>
        <begin position="47"/>
        <end position="49"/>
    </location>
</feature>
<feature type="strand" evidence="4">
    <location>
        <begin position="52"/>
        <end position="58"/>
    </location>
</feature>
<feature type="strand" evidence="4">
    <location>
        <begin position="61"/>
        <end position="71"/>
    </location>
</feature>
<feature type="helix" evidence="4">
    <location>
        <begin position="73"/>
        <end position="77"/>
    </location>
</feature>
<feature type="turn" evidence="4">
    <location>
        <begin position="78"/>
        <end position="80"/>
    </location>
</feature>
<feature type="helix" evidence="4">
    <location>
        <begin position="82"/>
        <end position="94"/>
    </location>
</feature>
<feature type="strand" evidence="4">
    <location>
        <begin position="95"/>
        <end position="97"/>
    </location>
</feature>
<feature type="strand" evidence="4">
    <location>
        <begin position="99"/>
        <end position="105"/>
    </location>
</feature>
<feature type="helix" evidence="4">
    <location>
        <begin position="109"/>
        <end position="111"/>
    </location>
</feature>
<feature type="helix" evidence="4">
    <location>
        <begin position="113"/>
        <end position="125"/>
    </location>
</feature>
<feature type="helix" evidence="4">
    <location>
        <begin position="130"/>
        <end position="143"/>
    </location>
</feature>
<feature type="strand" evidence="4">
    <location>
        <begin position="147"/>
        <end position="156"/>
    </location>
</feature>
<feature type="helix" evidence="4">
    <location>
        <begin position="157"/>
        <end position="159"/>
    </location>
</feature>
<feature type="strand" evidence="4">
    <location>
        <begin position="164"/>
        <end position="171"/>
    </location>
</feature>
<feature type="strand" evidence="4">
    <location>
        <begin position="180"/>
        <end position="191"/>
    </location>
</feature>
<feature type="strand" evidence="4">
    <location>
        <begin position="194"/>
        <end position="206"/>
    </location>
</feature>
<feature type="helix" evidence="4">
    <location>
        <begin position="210"/>
        <end position="214"/>
    </location>
</feature>
<sequence length="250" mass="27907">MGQKVHPIGIRLGVVKRHNANWYANPKQYAEYLLKDLQVREFLTKNLKNAMVSNILIERPSGAAKVTISTARPGIVIGKKGEDIEKLQRELTNIMGVPAQVSINEIDRPDLDARLVAEAIASQLEKRVMFRRAMKRAVQNTMRAGAKGIKVEVSGRLGGAEIARTEWYREGRVPLHTLRADIDYATMRAETTYGTIGVKVWIFRGEILGGMKQVMNPAPAEERPAKRGRGRGEGQERRGRRGDRAADKGE</sequence>
<dbReference type="EMBL" id="CP001182">
    <property type="protein sequence ID" value="ACJ42891.1"/>
    <property type="molecule type" value="Genomic_DNA"/>
</dbReference>
<dbReference type="PDB" id="7M4U">
    <property type="method" value="EM"/>
    <property type="resolution" value="2.71 A"/>
    <property type="chains" value="c=1-250"/>
</dbReference>
<dbReference type="PDBsum" id="7M4U"/>
<dbReference type="SMR" id="B7IA33"/>
<dbReference type="IntAct" id="B7IA33">
    <property type="interactions" value="1"/>
</dbReference>
<dbReference type="KEGG" id="abn:AB57_3524"/>
<dbReference type="HOGENOM" id="CLU_058591_0_2_6"/>
<dbReference type="Proteomes" id="UP000007094">
    <property type="component" value="Chromosome"/>
</dbReference>
<dbReference type="GO" id="GO:0022627">
    <property type="term" value="C:cytosolic small ribosomal subunit"/>
    <property type="evidence" value="ECO:0007669"/>
    <property type="project" value="TreeGrafter"/>
</dbReference>
<dbReference type="GO" id="GO:0003729">
    <property type="term" value="F:mRNA binding"/>
    <property type="evidence" value="ECO:0007669"/>
    <property type="project" value="UniProtKB-UniRule"/>
</dbReference>
<dbReference type="GO" id="GO:0019843">
    <property type="term" value="F:rRNA binding"/>
    <property type="evidence" value="ECO:0007669"/>
    <property type="project" value="UniProtKB-UniRule"/>
</dbReference>
<dbReference type="GO" id="GO:0003735">
    <property type="term" value="F:structural constituent of ribosome"/>
    <property type="evidence" value="ECO:0007669"/>
    <property type="project" value="InterPro"/>
</dbReference>
<dbReference type="GO" id="GO:0006412">
    <property type="term" value="P:translation"/>
    <property type="evidence" value="ECO:0007669"/>
    <property type="project" value="UniProtKB-UniRule"/>
</dbReference>
<dbReference type="CDD" id="cd02412">
    <property type="entry name" value="KH-II_30S_S3"/>
    <property type="match status" value="1"/>
</dbReference>
<dbReference type="FunFam" id="3.30.1140.32:FF:000001">
    <property type="entry name" value="30S ribosomal protein S3"/>
    <property type="match status" value="1"/>
</dbReference>
<dbReference type="FunFam" id="3.30.300.20:FF:000001">
    <property type="entry name" value="30S ribosomal protein S3"/>
    <property type="match status" value="1"/>
</dbReference>
<dbReference type="Gene3D" id="3.30.300.20">
    <property type="match status" value="1"/>
</dbReference>
<dbReference type="Gene3D" id="3.30.1140.32">
    <property type="entry name" value="Ribosomal protein S3, C-terminal domain"/>
    <property type="match status" value="1"/>
</dbReference>
<dbReference type="HAMAP" id="MF_01309_B">
    <property type="entry name" value="Ribosomal_uS3_B"/>
    <property type="match status" value="1"/>
</dbReference>
<dbReference type="InterPro" id="IPR004087">
    <property type="entry name" value="KH_dom"/>
</dbReference>
<dbReference type="InterPro" id="IPR015946">
    <property type="entry name" value="KH_dom-like_a/b"/>
</dbReference>
<dbReference type="InterPro" id="IPR004044">
    <property type="entry name" value="KH_dom_type_2"/>
</dbReference>
<dbReference type="InterPro" id="IPR009019">
    <property type="entry name" value="KH_sf_prok-type"/>
</dbReference>
<dbReference type="InterPro" id="IPR036419">
    <property type="entry name" value="Ribosomal_S3_C_sf"/>
</dbReference>
<dbReference type="InterPro" id="IPR005704">
    <property type="entry name" value="Ribosomal_uS3_bac-typ"/>
</dbReference>
<dbReference type="InterPro" id="IPR001351">
    <property type="entry name" value="Ribosomal_uS3_C"/>
</dbReference>
<dbReference type="InterPro" id="IPR018280">
    <property type="entry name" value="Ribosomal_uS3_CS"/>
</dbReference>
<dbReference type="NCBIfam" id="TIGR01009">
    <property type="entry name" value="rpsC_bact"/>
    <property type="match status" value="1"/>
</dbReference>
<dbReference type="PANTHER" id="PTHR11760">
    <property type="entry name" value="30S/40S RIBOSOMAL PROTEIN S3"/>
    <property type="match status" value="1"/>
</dbReference>
<dbReference type="PANTHER" id="PTHR11760:SF19">
    <property type="entry name" value="SMALL RIBOSOMAL SUBUNIT PROTEIN US3C"/>
    <property type="match status" value="1"/>
</dbReference>
<dbReference type="Pfam" id="PF07650">
    <property type="entry name" value="KH_2"/>
    <property type="match status" value="1"/>
</dbReference>
<dbReference type="Pfam" id="PF00189">
    <property type="entry name" value="Ribosomal_S3_C"/>
    <property type="match status" value="1"/>
</dbReference>
<dbReference type="SMART" id="SM00322">
    <property type="entry name" value="KH"/>
    <property type="match status" value="1"/>
</dbReference>
<dbReference type="SUPFAM" id="SSF54814">
    <property type="entry name" value="Prokaryotic type KH domain (KH-domain type II)"/>
    <property type="match status" value="1"/>
</dbReference>
<dbReference type="SUPFAM" id="SSF54821">
    <property type="entry name" value="Ribosomal protein S3 C-terminal domain"/>
    <property type="match status" value="1"/>
</dbReference>
<dbReference type="PROSITE" id="PS50823">
    <property type="entry name" value="KH_TYPE_2"/>
    <property type="match status" value="1"/>
</dbReference>
<dbReference type="PROSITE" id="PS00548">
    <property type="entry name" value="RIBOSOMAL_S3"/>
    <property type="match status" value="1"/>
</dbReference>
<organism>
    <name type="scientific">Acinetobacter baumannii (strain AB0057)</name>
    <dbReference type="NCBI Taxonomy" id="480119"/>
    <lineage>
        <taxon>Bacteria</taxon>
        <taxon>Pseudomonadati</taxon>
        <taxon>Pseudomonadota</taxon>
        <taxon>Gammaproteobacteria</taxon>
        <taxon>Moraxellales</taxon>
        <taxon>Moraxellaceae</taxon>
        <taxon>Acinetobacter</taxon>
        <taxon>Acinetobacter calcoaceticus/baumannii complex</taxon>
    </lineage>
</organism>
<name>RS3_ACIB5</name>